<organismHost>
    <name type="scientific">Homo sapiens</name>
    <name type="common">Human</name>
    <dbReference type="NCBI Taxonomy" id="9606"/>
</organismHost>
<keyword id="KW-1048">Host nucleus</keyword>
<keyword id="KW-1185">Reference proteome</keyword>
<gene>
    <name type="ORF">UL4</name>
</gene>
<organism>
    <name type="scientific">Human herpesvirus 1 (strain 17)</name>
    <name type="common">HHV-1</name>
    <name type="synonym">Human herpes simplex virus 1</name>
    <dbReference type="NCBI Taxonomy" id="10299"/>
    <lineage>
        <taxon>Viruses</taxon>
        <taxon>Duplodnaviria</taxon>
        <taxon>Heunggongvirae</taxon>
        <taxon>Peploviricota</taxon>
        <taxon>Herviviricetes</taxon>
        <taxon>Herpesvirales</taxon>
        <taxon>Orthoherpesviridae</taxon>
        <taxon>Alphaherpesvirinae</taxon>
        <taxon>Simplexvirus</taxon>
        <taxon>Simplexvirus humanalpha1</taxon>
        <taxon>Human herpesvirus 1</taxon>
    </lineage>
</organism>
<dbReference type="EMBL" id="X14112">
    <property type="protein sequence ID" value="CAA32340.1"/>
    <property type="molecule type" value="Genomic_DNA"/>
</dbReference>
<dbReference type="EMBL" id="DQ889502">
    <property type="protein sequence ID" value="ABI63466.1"/>
    <property type="molecule type" value="Genomic_DNA"/>
</dbReference>
<dbReference type="EMBL" id="AH002360">
    <property type="protein sequence ID" value="AAA45820.1"/>
    <property type="molecule type" value="Genomic_DNA"/>
</dbReference>
<dbReference type="PIR" id="D28133">
    <property type="entry name" value="WMBEX4"/>
</dbReference>
<dbReference type="RefSeq" id="YP_009137078.1">
    <property type="nucleotide sequence ID" value="NC_001806.2"/>
</dbReference>
<dbReference type="IntAct" id="P10188">
    <property type="interactions" value="1"/>
</dbReference>
<dbReference type="MINT" id="P10188"/>
<dbReference type="DNASU" id="2703362"/>
<dbReference type="GeneID" id="2703362"/>
<dbReference type="KEGG" id="vg:2703362"/>
<dbReference type="Proteomes" id="UP000009294">
    <property type="component" value="Segment"/>
</dbReference>
<dbReference type="GO" id="GO:0042025">
    <property type="term" value="C:host cell nucleus"/>
    <property type="evidence" value="ECO:0007669"/>
    <property type="project" value="UniProtKB-SubCell"/>
</dbReference>
<dbReference type="InterPro" id="IPR004958">
    <property type="entry name" value="Herpes_UL4"/>
</dbReference>
<dbReference type="Pfam" id="PF03277">
    <property type="entry name" value="Herpes_UL4"/>
    <property type="match status" value="1"/>
</dbReference>
<reference key="1">
    <citation type="journal article" date="1988" name="J. Gen. Virol.">
        <title>The complete DNA sequence of the long unique region in the genome of herpes simplex virus type 1.</title>
        <authorList>
            <person name="McGeoch D.J."/>
            <person name="Dalrymple M.A."/>
            <person name="Davison A.J."/>
            <person name="Dolan A."/>
            <person name="Frame M.C."/>
            <person name="McNab D."/>
            <person name="Perry L.J."/>
            <person name="Scott J.E."/>
            <person name="Taylor P."/>
        </authorList>
    </citation>
    <scope>NUCLEOTIDE SEQUENCE [LARGE SCALE GENOMIC DNA]</scope>
</reference>
<reference key="2">
    <citation type="journal article" date="2007" name="Microbes Infect.">
        <title>Determination and analysis of the DNA sequence of highly attenuated herpes simplex virus type 1 mutant HF10, a potential oncolytic virus.</title>
        <authorList>
            <person name="Ushijima Y."/>
            <person name="Luo C."/>
            <person name="Goshima F."/>
            <person name="Yamauchi Y."/>
            <person name="Kimura H."/>
            <person name="Nishiyama Y."/>
        </authorList>
    </citation>
    <scope>NUCLEOTIDE SEQUENCE [LARGE SCALE GENOMIC DNA]</scope>
    <source>
        <strain>Nonneuroinvasive mutant HF10</strain>
    </source>
</reference>
<reference key="3">
    <citation type="journal article" date="1988" name="J. Virol.">
        <title>Structures of herpes simplex virus type 1 genes required for replication of virus DNA.</title>
        <authorList>
            <person name="McGeoch D.J."/>
            <person name="Dalrymple M.A."/>
            <person name="Dolan A."/>
            <person name="McNab D."/>
            <person name="Perry L.J."/>
            <person name="Taylor P."/>
            <person name="Challberg M.D."/>
        </authorList>
    </citation>
    <scope>NUCLEOTIDE SEQUENCE [GENOMIC DNA] OF 1-17</scope>
</reference>
<reference key="4">
    <citation type="journal article" date="1998" name="J. Gen. Virol.">
        <title>Identification of the UL4 protein of herpes simplex virus type 1.</title>
        <authorList>
            <person name="Eide T."/>
            <person name="Marsden H.S."/>
            <person name="Leib D.A."/>
            <person name="Cunningham C."/>
            <person name="Davison A.J."/>
            <person name="Langeland N."/>
            <person name="Haarr L."/>
        </authorList>
    </citation>
    <scope>IDENTIFICATION</scope>
    <scope>SUBCELLULAR LOCATION</scope>
    <source>
        <strain>17 syn+</strain>
    </source>
</reference>
<sequence length="199" mass="21517">MSNPQTTIAYSLCHARASLTSALPDAAQVVHVFEYGTRAIMVRGRERQDRLPRGGVVIQHTPIGLLVIIDCRAEFCAYRFIGRDSNQKLERGWDAHMYAYPFDSWVSSSRGESARSATAGILTVVWTADTIYITATIYGSPPEETPGAAHGVGAAPPPPTTACPGTAEFLQPTADLLVEVLREIQLSPALEYADKLLGS</sequence>
<accession>P10188</accession>
<accession>Q09IC9</accession>
<comment type="subcellular location">
    <subcellularLocation>
        <location evidence="1">Host nucleus</location>
    </subcellularLocation>
</comment>
<comment type="similarity">
    <text evidence="2">Belongs to the alphaherpesvirinae HHV-1 UL4 family.</text>
</comment>
<protein>
    <recommendedName>
        <fullName>Nuclear protein UL4</fullName>
    </recommendedName>
</protein>
<proteinExistence type="inferred from homology"/>
<name>NP04_HHV11</name>
<evidence type="ECO:0000269" key="1">
    <source>
    </source>
</evidence>
<evidence type="ECO:0000305" key="2"/>
<feature type="chain" id="PRO_0000115898" description="Nuclear protein UL4">
    <location>
        <begin position="1"/>
        <end position="199"/>
    </location>
</feature>
<feature type="sequence variant" description="In strain: Nonneuroinvasive mutant HF10.">
    <original>S</original>
    <variation>I</variation>
    <location>
        <position position="107"/>
    </location>
</feature>